<organismHost>
    <name type="scientific">Equus caballus</name>
    <name type="common">Horse</name>
    <dbReference type="NCBI Taxonomy" id="9796"/>
</organismHost>
<evidence type="ECO:0000255" key="1"/>
<evidence type="ECO:0000255" key="2">
    <source>
        <dbReference type="PROSITE-ProRule" id="PRU00521"/>
    </source>
</evidence>
<evidence type="ECO:0000305" key="3"/>
<accession>Q66673</accession>
<reference key="1">
    <citation type="journal article" date="1995" name="J. Mol. Biol.">
        <title>The DNA sequence of equine herpesvirus 2.</title>
        <authorList>
            <person name="Telford E.A.R."/>
            <person name="Watson M.S."/>
            <person name="Aird H.C."/>
            <person name="Perry J."/>
            <person name="Davison A.J."/>
        </authorList>
    </citation>
    <scope>NUCLEOTIDE SEQUENCE [LARGE SCALE GENOMIC DNA]</scope>
</reference>
<gene>
    <name type="primary">74</name>
</gene>
<organism>
    <name type="scientific">Equine herpesvirus 2 (strain 86/87)</name>
    <name type="common">EHV-2</name>
    <dbReference type="NCBI Taxonomy" id="82831"/>
    <lineage>
        <taxon>Viruses</taxon>
        <taxon>Duplodnaviria</taxon>
        <taxon>Heunggongvirae</taxon>
        <taxon>Peploviricota</taxon>
        <taxon>Herviviricetes</taxon>
        <taxon>Herpesvirales</taxon>
        <taxon>Orthoherpesviridae</taxon>
        <taxon>Gammaherpesvirinae</taxon>
        <taxon>Percavirus</taxon>
        <taxon>Percavirus equidgamma2</taxon>
        <taxon>Equid gammaherpesvirus 2</taxon>
    </lineage>
</organism>
<name>VG74_EHV2</name>
<dbReference type="EMBL" id="U20824">
    <property type="protein sequence ID" value="AAC13861.1"/>
    <property type="molecule type" value="Genomic_DNA"/>
</dbReference>
<dbReference type="PIR" id="S55595">
    <property type="entry name" value="S55595"/>
</dbReference>
<dbReference type="SMR" id="Q66673"/>
<dbReference type="KEGG" id="vg:1461030"/>
<dbReference type="Proteomes" id="UP000007083">
    <property type="component" value="Segment"/>
</dbReference>
<dbReference type="GO" id="GO:0033644">
    <property type="term" value="C:host cell membrane"/>
    <property type="evidence" value="ECO:0007669"/>
    <property type="project" value="UniProtKB-SubCell"/>
</dbReference>
<dbReference type="GO" id="GO:0016020">
    <property type="term" value="C:membrane"/>
    <property type="evidence" value="ECO:0007669"/>
    <property type="project" value="UniProtKB-KW"/>
</dbReference>
<dbReference type="GO" id="GO:0004930">
    <property type="term" value="F:G protein-coupled receptor activity"/>
    <property type="evidence" value="ECO:0007669"/>
    <property type="project" value="UniProtKB-KW"/>
</dbReference>
<dbReference type="CDD" id="cd00637">
    <property type="entry name" value="7tm_classA_rhodopsin-like"/>
    <property type="match status" value="1"/>
</dbReference>
<dbReference type="Gene3D" id="1.20.1070.10">
    <property type="entry name" value="Rhodopsin 7-helix transmembrane proteins"/>
    <property type="match status" value="1"/>
</dbReference>
<dbReference type="InterPro" id="IPR050119">
    <property type="entry name" value="CCR1-9-like"/>
</dbReference>
<dbReference type="InterPro" id="IPR000276">
    <property type="entry name" value="GPCR_Rhodpsn"/>
</dbReference>
<dbReference type="InterPro" id="IPR017452">
    <property type="entry name" value="GPCR_Rhodpsn_7TM"/>
</dbReference>
<dbReference type="PANTHER" id="PTHR10489">
    <property type="entry name" value="CELL ADHESION MOLECULE"/>
    <property type="match status" value="1"/>
</dbReference>
<dbReference type="PANTHER" id="PTHR10489:SF932">
    <property type="entry name" value="G-PROTEIN COUPLED RECEPTORS FAMILY 1 PROFILE DOMAIN-CONTAINING PROTEIN"/>
    <property type="match status" value="1"/>
</dbReference>
<dbReference type="Pfam" id="PF00001">
    <property type="entry name" value="7tm_1"/>
    <property type="match status" value="1"/>
</dbReference>
<dbReference type="PRINTS" id="PR00237">
    <property type="entry name" value="GPCRRHODOPSN"/>
</dbReference>
<dbReference type="SUPFAM" id="SSF81321">
    <property type="entry name" value="Family A G protein-coupled receptor-like"/>
    <property type="match status" value="1"/>
</dbReference>
<dbReference type="PROSITE" id="PS50262">
    <property type="entry name" value="G_PROTEIN_RECEP_F1_2"/>
    <property type="match status" value="1"/>
</dbReference>
<feature type="chain" id="PRO_0000405981" description="G-protein coupled receptor 74">
    <location>
        <begin position="1"/>
        <end position="330"/>
    </location>
</feature>
<feature type="transmembrane region" description="Helical" evidence="1">
    <location>
        <begin position="50"/>
        <end position="70"/>
    </location>
</feature>
<feature type="transmembrane region" description="Helical" evidence="1">
    <location>
        <begin position="85"/>
        <end position="105"/>
    </location>
</feature>
<feature type="transmembrane region" description="Helical" evidence="1">
    <location>
        <begin position="121"/>
        <end position="141"/>
    </location>
</feature>
<feature type="transmembrane region" description="Helical" evidence="1">
    <location>
        <begin position="160"/>
        <end position="180"/>
    </location>
</feature>
<feature type="transmembrane region" description="Helical" evidence="1">
    <location>
        <begin position="210"/>
        <end position="230"/>
    </location>
</feature>
<feature type="transmembrane region" description="Helical" evidence="1">
    <location>
        <begin position="252"/>
        <end position="272"/>
    </location>
</feature>
<feature type="transmembrane region" description="Helical" evidence="1">
    <location>
        <begin position="295"/>
        <end position="315"/>
    </location>
</feature>
<feature type="disulfide bond" evidence="2">
    <location>
        <begin position="117"/>
        <end position="195"/>
    </location>
</feature>
<keyword id="KW-1015">Disulfide bond</keyword>
<keyword id="KW-0297">G-protein coupled receptor</keyword>
<keyword id="KW-1043">Host membrane</keyword>
<keyword id="KW-0472">Membrane</keyword>
<keyword id="KW-0675">Receptor</keyword>
<keyword id="KW-1185">Reference proteome</keyword>
<keyword id="KW-0807">Transducer</keyword>
<keyword id="KW-0812">Transmembrane</keyword>
<keyword id="KW-1133">Transmembrane helix</keyword>
<sequence>MESGSGSGAALNSTPFPTYSTPNFTDDYDWNSSDWYGLTNQCQAVSFSKLIVVPCLVILLVFCLIGNLWLLFKLLEKTVKKVSTFILILMCLNSFWGCLCMIFSIVENFAEFSTSVCKLRMVVFWVYVFFDMFLICWLCFDTWCAVWFSVRRTEANQKCWVFCTVALIILAFILSMQKALHVEAIKEYGQVRSSCQFHKETHSTLKVFNVAVSVNVLGFLLPLLFLCIFYGMCLWKLYKAVFKTKTKVIKTMLLFVFMFLLTWGPYYILSFIDGLLSAGYISESCSLKKTLGLMLPLLGLWGMAHGGLQVFIYILCNSHFNKSLFSCFKK</sequence>
<protein>
    <recommendedName>
        <fullName>G-protein coupled receptor 74</fullName>
    </recommendedName>
</protein>
<proteinExistence type="inferred from homology"/>
<comment type="subcellular location">
    <subcellularLocation>
        <location evidence="3">Host membrane</location>
        <topology evidence="3">Multi-pass membrane protein</topology>
    </subcellularLocation>
</comment>
<comment type="similarity">
    <text evidence="2">Belongs to the G-protein coupled receptor 1 family.</text>
</comment>